<sequence>MESHLGNGVGSSRSAKNTKNTSSSVDWLSRDMLEMKIRDKTEADEERDSEPDIIDGVGAEPGHVITTTLPGRNGQSRQTVSYIAEHVVGTGSFGMVFQAKCRETGEVVAIKKVLQDKRYKNRELQIMQMLDHPNVVCLKHSFYSRTENEEVYLNLVLEFVPETVNRTARSYSRMNQLMPLIYVKLYTYQICRGLAYLHNCCGLCHRDIKPQNLLVNPHTHQLKICDFGSAKVLVKGEPNISYICSRYYRAPELIFGATEYTTAIDIWSTGCVMAELLLGQPLFPGESGVDQLVEIIKVLGTPTREEIKCMNPNYTEFKFPQIKPHPWHKVFQKRLPPEAVDLLCRFFQYSPNLRCTAVEACIHPFFDELRDPNARLPNGRPLPPLFNFKPQELSGIPPETVDRLVPEHARKQNHFMALHS</sequence>
<organism>
    <name type="scientific">Arabidopsis thaliana</name>
    <name type="common">Mouse-ear cress</name>
    <dbReference type="NCBI Taxonomy" id="3702"/>
    <lineage>
        <taxon>Eukaryota</taxon>
        <taxon>Viridiplantae</taxon>
        <taxon>Streptophyta</taxon>
        <taxon>Embryophyta</taxon>
        <taxon>Tracheophyta</taxon>
        <taxon>Spermatophyta</taxon>
        <taxon>Magnoliopsida</taxon>
        <taxon>eudicotyledons</taxon>
        <taxon>Gunneridae</taxon>
        <taxon>Pentapetalae</taxon>
        <taxon>rosids</taxon>
        <taxon>malvids</taxon>
        <taxon>Brassicales</taxon>
        <taxon>Brassicaceae</taxon>
        <taxon>Camelineae</taxon>
        <taxon>Arabidopsis</taxon>
    </lineage>
</organism>
<comment type="function">
    <text evidence="1">May mediate extracellular signals to regulate transcription in differentiating cells.</text>
</comment>
<comment type="catalytic activity">
    <reaction>
        <text>L-seryl-[protein] + ATP = O-phospho-L-seryl-[protein] + ADP + H(+)</text>
        <dbReference type="Rhea" id="RHEA:17989"/>
        <dbReference type="Rhea" id="RHEA-COMP:9863"/>
        <dbReference type="Rhea" id="RHEA-COMP:11604"/>
        <dbReference type="ChEBI" id="CHEBI:15378"/>
        <dbReference type="ChEBI" id="CHEBI:29999"/>
        <dbReference type="ChEBI" id="CHEBI:30616"/>
        <dbReference type="ChEBI" id="CHEBI:83421"/>
        <dbReference type="ChEBI" id="CHEBI:456216"/>
        <dbReference type="EC" id="2.7.11.1"/>
    </reaction>
</comment>
<comment type="catalytic activity">
    <reaction>
        <text>L-threonyl-[protein] + ATP = O-phospho-L-threonyl-[protein] + ADP + H(+)</text>
        <dbReference type="Rhea" id="RHEA:46608"/>
        <dbReference type="Rhea" id="RHEA-COMP:11060"/>
        <dbReference type="Rhea" id="RHEA-COMP:11605"/>
        <dbReference type="ChEBI" id="CHEBI:15378"/>
        <dbReference type="ChEBI" id="CHEBI:30013"/>
        <dbReference type="ChEBI" id="CHEBI:30616"/>
        <dbReference type="ChEBI" id="CHEBI:61977"/>
        <dbReference type="ChEBI" id="CHEBI:456216"/>
        <dbReference type="EC" id="2.7.11.1"/>
    </reaction>
</comment>
<comment type="alternative products">
    <event type="alternative splicing"/>
    <isoform>
        <id>Q9FVS6-1</id>
        <name>1</name>
        <sequence type="displayed"/>
    </isoform>
    <text>A number of isoforms are produced. According to EST sequences.</text>
</comment>
<comment type="PTM">
    <text evidence="1">Autophosphorylated mainly on threonine and serine residues.</text>
</comment>
<comment type="similarity">
    <text evidence="6">Belongs to the protein kinase superfamily. CMGC Ser/Thr protein kinase family. GSK-3 subfamily.</text>
</comment>
<protein>
    <recommendedName>
        <fullName>Shaggy-related protein kinase delta</fullName>
        <ecNumber>2.7.11.1</ecNumber>
    </recommendedName>
    <alternativeName>
        <fullName>ASK-delta</fullName>
    </alternativeName>
    <alternativeName>
        <fullName>Shaggy-related protein kinase 42</fullName>
        <shortName>AtSK42</shortName>
    </alternativeName>
</protein>
<proteinExistence type="evidence at transcript level"/>
<evidence type="ECO:0000250" key="1"/>
<evidence type="ECO:0000250" key="2">
    <source>
        <dbReference type="UniProtKB" id="Q39011"/>
    </source>
</evidence>
<evidence type="ECO:0000255" key="3">
    <source>
        <dbReference type="PROSITE-ProRule" id="PRU00159"/>
    </source>
</evidence>
<evidence type="ECO:0000255" key="4">
    <source>
        <dbReference type="PROSITE-ProRule" id="PRU10027"/>
    </source>
</evidence>
<evidence type="ECO:0000256" key="5">
    <source>
        <dbReference type="SAM" id="MobiDB-lite"/>
    </source>
</evidence>
<evidence type="ECO:0000305" key="6"/>
<evidence type="ECO:0000312" key="7">
    <source>
        <dbReference type="Araport" id="AT1G57870"/>
    </source>
</evidence>
<evidence type="ECO:0000312" key="8">
    <source>
        <dbReference type="EMBL" id="AAG29234.1"/>
    </source>
</evidence>
<evidence type="ECO:0000312" key="9">
    <source>
        <dbReference type="EMBL" id="AAG50665.1"/>
    </source>
</evidence>
<gene>
    <name type="primary">ASK4</name>
    <name type="synonym">SK42</name>
    <name evidence="7" type="ordered locus">At1g57870</name>
    <name evidence="8" type="ORF">F12K22.12</name>
    <name evidence="9" type="ORF">F13D13.5</name>
</gene>
<dbReference type="EC" id="2.7.11.1"/>
<dbReference type="EMBL" id="AC079732">
    <property type="protein sequence ID" value="AAG29234.1"/>
    <property type="molecule type" value="Genomic_DNA"/>
</dbReference>
<dbReference type="EMBL" id="AC079991">
    <property type="protein sequence ID" value="AAG50665.1"/>
    <property type="molecule type" value="Genomic_DNA"/>
</dbReference>
<dbReference type="EMBL" id="CP002684">
    <property type="protein sequence ID" value="AEE33475.1"/>
    <property type="molecule type" value="Genomic_DNA"/>
</dbReference>
<dbReference type="EMBL" id="CP002684">
    <property type="protein sequence ID" value="AEE33476.1"/>
    <property type="molecule type" value="Genomic_DNA"/>
</dbReference>
<dbReference type="EMBL" id="CP002684">
    <property type="protein sequence ID" value="ANM57937.1"/>
    <property type="molecule type" value="Genomic_DNA"/>
</dbReference>
<dbReference type="EMBL" id="BT002018">
    <property type="protein sequence ID" value="AAN72029.1"/>
    <property type="molecule type" value="mRNA"/>
</dbReference>
<dbReference type="EMBL" id="BT008861">
    <property type="protein sequence ID" value="AAP68300.1"/>
    <property type="molecule type" value="mRNA"/>
</dbReference>
<dbReference type="PIR" id="A96613">
    <property type="entry name" value="A96613"/>
</dbReference>
<dbReference type="RefSeq" id="NP_001319262.1">
    <molecule id="Q9FVS6-1"/>
    <property type="nucleotide sequence ID" value="NM_001333808.1"/>
</dbReference>
<dbReference type="RefSeq" id="NP_001320412.1">
    <molecule id="Q9FVS6-1"/>
    <property type="nucleotide sequence ID" value="NM_001333809.1"/>
</dbReference>
<dbReference type="RefSeq" id="NP_176096.1">
    <molecule id="Q9FVS6-1"/>
    <property type="nucleotide sequence ID" value="NM_104580.5"/>
</dbReference>
<dbReference type="SMR" id="Q9FVS6"/>
<dbReference type="BioGRID" id="27387">
    <property type="interactions" value="24"/>
</dbReference>
<dbReference type="FunCoup" id="Q9FVS6">
    <property type="interactions" value="3277"/>
</dbReference>
<dbReference type="IntAct" id="Q9FVS6">
    <property type="interactions" value="23"/>
</dbReference>
<dbReference type="STRING" id="3702.Q9FVS6"/>
<dbReference type="iPTMnet" id="Q9FVS6"/>
<dbReference type="PaxDb" id="3702-AT1G57870.3"/>
<dbReference type="ProteomicsDB" id="237110">
    <molecule id="Q9FVS6-1"/>
</dbReference>
<dbReference type="EnsemblPlants" id="AT1G57870.1">
    <molecule id="Q9FVS6-1"/>
    <property type="protein sequence ID" value="AT1G57870.1"/>
    <property type="gene ID" value="AT1G57870"/>
</dbReference>
<dbReference type="EnsemblPlants" id="AT1G57870.2">
    <molecule id="Q9FVS6-1"/>
    <property type="protein sequence ID" value="AT1G57870.2"/>
    <property type="gene ID" value="AT1G57870"/>
</dbReference>
<dbReference type="EnsemblPlants" id="AT1G57870.4">
    <molecule id="Q9FVS6-1"/>
    <property type="protein sequence ID" value="AT1G57870.4"/>
    <property type="gene ID" value="AT1G57870"/>
</dbReference>
<dbReference type="GeneID" id="842162"/>
<dbReference type="Gramene" id="AT1G57870.1">
    <molecule id="Q9FVS6-1"/>
    <property type="protein sequence ID" value="AT1G57870.1"/>
    <property type="gene ID" value="AT1G57870"/>
</dbReference>
<dbReference type="Gramene" id="AT1G57870.2">
    <molecule id="Q9FVS6-1"/>
    <property type="protein sequence ID" value="AT1G57870.2"/>
    <property type="gene ID" value="AT1G57870"/>
</dbReference>
<dbReference type="Gramene" id="AT1G57870.4">
    <molecule id="Q9FVS6-1"/>
    <property type="protein sequence ID" value="AT1G57870.4"/>
    <property type="gene ID" value="AT1G57870"/>
</dbReference>
<dbReference type="KEGG" id="ath:AT1G57870"/>
<dbReference type="Araport" id="AT1G57870"/>
<dbReference type="TAIR" id="AT1G57870">
    <property type="gene designation" value="SK42"/>
</dbReference>
<dbReference type="eggNOG" id="KOG0658">
    <property type="taxonomic scope" value="Eukaryota"/>
</dbReference>
<dbReference type="HOGENOM" id="CLU_000288_181_20_1"/>
<dbReference type="InParanoid" id="Q9FVS6"/>
<dbReference type="OMA" id="CIVICHR"/>
<dbReference type="PhylomeDB" id="Q9FVS6"/>
<dbReference type="PRO" id="PR:Q9FVS6"/>
<dbReference type="Proteomes" id="UP000006548">
    <property type="component" value="Chromosome 1"/>
</dbReference>
<dbReference type="ExpressionAtlas" id="Q9FVS6">
    <property type="expression patterns" value="baseline and differential"/>
</dbReference>
<dbReference type="GO" id="GO:0005524">
    <property type="term" value="F:ATP binding"/>
    <property type="evidence" value="ECO:0007669"/>
    <property type="project" value="UniProtKB-KW"/>
</dbReference>
<dbReference type="GO" id="GO:0106310">
    <property type="term" value="F:protein serine kinase activity"/>
    <property type="evidence" value="ECO:0007669"/>
    <property type="project" value="RHEA"/>
</dbReference>
<dbReference type="GO" id="GO:0004674">
    <property type="term" value="F:protein serine/threonine kinase activity"/>
    <property type="evidence" value="ECO:0007669"/>
    <property type="project" value="UniProtKB-KW"/>
</dbReference>
<dbReference type="CDD" id="cd14137">
    <property type="entry name" value="STKc_GSK3"/>
    <property type="match status" value="1"/>
</dbReference>
<dbReference type="FunFam" id="3.30.200.20:FF:000009">
    <property type="entry name" value="Glycogen synthase kinase-3 beta"/>
    <property type="match status" value="1"/>
</dbReference>
<dbReference type="FunFam" id="1.10.510.10:FF:000082">
    <property type="entry name" value="Shaggy-related protein kinase kappa"/>
    <property type="match status" value="1"/>
</dbReference>
<dbReference type="Gene3D" id="3.30.200.20">
    <property type="entry name" value="Phosphorylase Kinase, domain 1"/>
    <property type="match status" value="1"/>
</dbReference>
<dbReference type="Gene3D" id="1.10.510.10">
    <property type="entry name" value="Transferase(Phosphotransferase) domain 1"/>
    <property type="match status" value="1"/>
</dbReference>
<dbReference type="InterPro" id="IPR050591">
    <property type="entry name" value="GSK-3"/>
</dbReference>
<dbReference type="InterPro" id="IPR011009">
    <property type="entry name" value="Kinase-like_dom_sf"/>
</dbReference>
<dbReference type="InterPro" id="IPR000719">
    <property type="entry name" value="Prot_kinase_dom"/>
</dbReference>
<dbReference type="InterPro" id="IPR017441">
    <property type="entry name" value="Protein_kinase_ATP_BS"/>
</dbReference>
<dbReference type="InterPro" id="IPR008271">
    <property type="entry name" value="Ser/Thr_kinase_AS"/>
</dbReference>
<dbReference type="InterPro" id="IPR039192">
    <property type="entry name" value="STKc_GSK3"/>
</dbReference>
<dbReference type="PANTHER" id="PTHR24057">
    <property type="entry name" value="GLYCOGEN SYNTHASE KINASE-3 ALPHA"/>
    <property type="match status" value="1"/>
</dbReference>
<dbReference type="PANTHER" id="PTHR24057:SF40">
    <property type="entry name" value="SHAGGY-RELATED PROTEIN KINASE DELTA-RELATED"/>
    <property type="match status" value="1"/>
</dbReference>
<dbReference type="Pfam" id="PF00069">
    <property type="entry name" value="Pkinase"/>
    <property type="match status" value="1"/>
</dbReference>
<dbReference type="SMART" id="SM00220">
    <property type="entry name" value="S_TKc"/>
    <property type="match status" value="1"/>
</dbReference>
<dbReference type="SUPFAM" id="SSF56112">
    <property type="entry name" value="Protein kinase-like (PK-like)"/>
    <property type="match status" value="1"/>
</dbReference>
<dbReference type="PROSITE" id="PS00107">
    <property type="entry name" value="PROTEIN_KINASE_ATP"/>
    <property type="match status" value="1"/>
</dbReference>
<dbReference type="PROSITE" id="PS50011">
    <property type="entry name" value="PROTEIN_KINASE_DOM"/>
    <property type="match status" value="1"/>
</dbReference>
<dbReference type="PROSITE" id="PS00108">
    <property type="entry name" value="PROTEIN_KINASE_ST"/>
    <property type="match status" value="1"/>
</dbReference>
<reference key="1">
    <citation type="journal article" date="2000" name="Nature">
        <title>Sequence and analysis of chromosome 1 of the plant Arabidopsis thaliana.</title>
        <authorList>
            <person name="Theologis A."/>
            <person name="Ecker J.R."/>
            <person name="Palm C.J."/>
            <person name="Federspiel N.A."/>
            <person name="Kaul S."/>
            <person name="White O."/>
            <person name="Alonso J."/>
            <person name="Altafi H."/>
            <person name="Araujo R."/>
            <person name="Bowman C.L."/>
            <person name="Brooks S.Y."/>
            <person name="Buehler E."/>
            <person name="Chan A."/>
            <person name="Chao Q."/>
            <person name="Chen H."/>
            <person name="Cheuk R.F."/>
            <person name="Chin C.W."/>
            <person name="Chung M.K."/>
            <person name="Conn L."/>
            <person name="Conway A.B."/>
            <person name="Conway A.R."/>
            <person name="Creasy T.H."/>
            <person name="Dewar K."/>
            <person name="Dunn P."/>
            <person name="Etgu P."/>
            <person name="Feldblyum T.V."/>
            <person name="Feng J.-D."/>
            <person name="Fong B."/>
            <person name="Fujii C.Y."/>
            <person name="Gill J.E."/>
            <person name="Goldsmith A.D."/>
            <person name="Haas B."/>
            <person name="Hansen N.F."/>
            <person name="Hughes B."/>
            <person name="Huizar L."/>
            <person name="Hunter J.L."/>
            <person name="Jenkins J."/>
            <person name="Johnson-Hopson C."/>
            <person name="Khan S."/>
            <person name="Khaykin E."/>
            <person name="Kim C.J."/>
            <person name="Koo H.L."/>
            <person name="Kremenetskaia I."/>
            <person name="Kurtz D.B."/>
            <person name="Kwan A."/>
            <person name="Lam B."/>
            <person name="Langin-Hooper S."/>
            <person name="Lee A."/>
            <person name="Lee J.M."/>
            <person name="Lenz C.A."/>
            <person name="Li J.H."/>
            <person name="Li Y.-P."/>
            <person name="Lin X."/>
            <person name="Liu S.X."/>
            <person name="Liu Z.A."/>
            <person name="Luros J.S."/>
            <person name="Maiti R."/>
            <person name="Marziali A."/>
            <person name="Militscher J."/>
            <person name="Miranda M."/>
            <person name="Nguyen M."/>
            <person name="Nierman W.C."/>
            <person name="Osborne B.I."/>
            <person name="Pai G."/>
            <person name="Peterson J."/>
            <person name="Pham P.K."/>
            <person name="Rizzo M."/>
            <person name="Rooney T."/>
            <person name="Rowley D."/>
            <person name="Sakano H."/>
            <person name="Salzberg S.L."/>
            <person name="Schwartz J.R."/>
            <person name="Shinn P."/>
            <person name="Southwick A.M."/>
            <person name="Sun H."/>
            <person name="Tallon L.J."/>
            <person name="Tambunga G."/>
            <person name="Toriumi M.J."/>
            <person name="Town C.D."/>
            <person name="Utterback T."/>
            <person name="Van Aken S."/>
            <person name="Vaysberg M."/>
            <person name="Vysotskaia V.S."/>
            <person name="Walker M."/>
            <person name="Wu D."/>
            <person name="Yu G."/>
            <person name="Fraser C.M."/>
            <person name="Venter J.C."/>
            <person name="Davis R.W."/>
        </authorList>
    </citation>
    <scope>NUCLEOTIDE SEQUENCE [LARGE SCALE GENOMIC DNA]</scope>
    <source>
        <strain>cv. Columbia</strain>
    </source>
</reference>
<reference key="2">
    <citation type="journal article" date="2017" name="Plant J.">
        <title>Araport11: a complete reannotation of the Arabidopsis thaliana reference genome.</title>
        <authorList>
            <person name="Cheng C.Y."/>
            <person name="Krishnakumar V."/>
            <person name="Chan A.P."/>
            <person name="Thibaud-Nissen F."/>
            <person name="Schobel S."/>
            <person name="Town C.D."/>
        </authorList>
    </citation>
    <scope>GENOME REANNOTATION</scope>
    <source>
        <strain>cv. Columbia</strain>
    </source>
</reference>
<reference key="3">
    <citation type="journal article" date="2003" name="Science">
        <title>Empirical analysis of transcriptional activity in the Arabidopsis genome.</title>
        <authorList>
            <person name="Yamada K."/>
            <person name="Lim J."/>
            <person name="Dale J.M."/>
            <person name="Chen H."/>
            <person name="Shinn P."/>
            <person name="Palm C.J."/>
            <person name="Southwick A.M."/>
            <person name="Wu H.C."/>
            <person name="Kim C.J."/>
            <person name="Nguyen M."/>
            <person name="Pham P.K."/>
            <person name="Cheuk R.F."/>
            <person name="Karlin-Newmann G."/>
            <person name="Liu S.X."/>
            <person name="Lam B."/>
            <person name="Sakano H."/>
            <person name="Wu T."/>
            <person name="Yu G."/>
            <person name="Miranda M."/>
            <person name="Quach H.L."/>
            <person name="Tripp M."/>
            <person name="Chang C.H."/>
            <person name="Lee J.M."/>
            <person name="Toriumi M.J."/>
            <person name="Chan M.M."/>
            <person name="Tang C.C."/>
            <person name="Onodera C.S."/>
            <person name="Deng J.M."/>
            <person name="Akiyama K."/>
            <person name="Ansari Y."/>
            <person name="Arakawa T."/>
            <person name="Banh J."/>
            <person name="Banno F."/>
            <person name="Bowser L."/>
            <person name="Brooks S.Y."/>
            <person name="Carninci P."/>
            <person name="Chao Q."/>
            <person name="Choy N."/>
            <person name="Enju A."/>
            <person name="Goldsmith A.D."/>
            <person name="Gurjal M."/>
            <person name="Hansen N.F."/>
            <person name="Hayashizaki Y."/>
            <person name="Johnson-Hopson C."/>
            <person name="Hsuan V.W."/>
            <person name="Iida K."/>
            <person name="Karnes M."/>
            <person name="Khan S."/>
            <person name="Koesema E."/>
            <person name="Ishida J."/>
            <person name="Jiang P.X."/>
            <person name="Jones T."/>
            <person name="Kawai J."/>
            <person name="Kamiya A."/>
            <person name="Meyers C."/>
            <person name="Nakajima M."/>
            <person name="Narusaka M."/>
            <person name="Seki M."/>
            <person name="Sakurai T."/>
            <person name="Satou M."/>
            <person name="Tamse R."/>
            <person name="Vaysberg M."/>
            <person name="Wallender E.K."/>
            <person name="Wong C."/>
            <person name="Yamamura Y."/>
            <person name="Yuan S."/>
            <person name="Shinozaki K."/>
            <person name="Davis R.W."/>
            <person name="Theologis A."/>
            <person name="Ecker J.R."/>
        </authorList>
    </citation>
    <scope>NUCLEOTIDE SEQUENCE [LARGE SCALE MRNA]</scope>
    <source>
        <strain>cv. Columbia</strain>
    </source>
</reference>
<keyword id="KW-0025">Alternative splicing</keyword>
<keyword id="KW-0067">ATP-binding</keyword>
<keyword id="KW-0418">Kinase</keyword>
<keyword id="KW-0547">Nucleotide-binding</keyword>
<keyword id="KW-0597">Phosphoprotein</keyword>
<keyword id="KW-1185">Reference proteome</keyword>
<keyword id="KW-0723">Serine/threonine-protein kinase</keyword>
<keyword id="KW-0808">Transferase</keyword>
<accession>Q9FVS6</accession>
<feature type="chain" id="PRO_0000086219" description="Shaggy-related protein kinase delta">
    <location>
        <begin position="1"/>
        <end position="420"/>
    </location>
</feature>
<feature type="domain" description="Protein kinase" evidence="3">
    <location>
        <begin position="82"/>
        <end position="366"/>
    </location>
</feature>
<feature type="region of interest" description="Disordered" evidence="5">
    <location>
        <begin position="1"/>
        <end position="61"/>
    </location>
</feature>
<feature type="compositionally biased region" description="Polar residues" evidence="5">
    <location>
        <begin position="10"/>
        <end position="26"/>
    </location>
</feature>
<feature type="compositionally biased region" description="Basic and acidic residues" evidence="5">
    <location>
        <begin position="28"/>
        <end position="41"/>
    </location>
</feature>
<feature type="compositionally biased region" description="Acidic residues" evidence="5">
    <location>
        <begin position="42"/>
        <end position="53"/>
    </location>
</feature>
<feature type="active site" description="Proton acceptor" evidence="3 4">
    <location>
        <position position="207"/>
    </location>
</feature>
<feature type="binding site" evidence="3">
    <location>
        <begin position="88"/>
        <end position="96"/>
    </location>
    <ligand>
        <name>ATP</name>
        <dbReference type="ChEBI" id="CHEBI:30616"/>
    </ligand>
</feature>
<feature type="binding site" evidence="3">
    <location>
        <position position="111"/>
    </location>
    <ligand>
        <name>ATP</name>
        <dbReference type="ChEBI" id="CHEBI:30616"/>
    </ligand>
</feature>
<feature type="modified residue" description="Phosphotyrosine" evidence="2">
    <location>
        <position position="242"/>
    </location>
</feature>
<name>KSG4_ARATH</name>